<reference key="1">
    <citation type="submission" date="2006-10" db="EMBL/GenBank/DDBJ databases">
        <authorList>
            <person name="Fleischmann R.D."/>
            <person name="Dodson R.J."/>
            <person name="Haft D.H."/>
            <person name="Merkel J.S."/>
            <person name="Nelson W.C."/>
            <person name="Fraser C.M."/>
        </authorList>
    </citation>
    <scope>NUCLEOTIDE SEQUENCE [LARGE SCALE GENOMIC DNA]</scope>
    <source>
        <strain>ATCC 700084 / mc(2)155</strain>
    </source>
</reference>
<reference key="2">
    <citation type="journal article" date="2007" name="Genome Biol.">
        <title>Interrupted coding sequences in Mycobacterium smegmatis: authentic mutations or sequencing errors?</title>
        <authorList>
            <person name="Deshayes C."/>
            <person name="Perrodou E."/>
            <person name="Gallien S."/>
            <person name="Euphrasie D."/>
            <person name="Schaeffer C."/>
            <person name="Van-Dorsselaer A."/>
            <person name="Poch O."/>
            <person name="Lecompte O."/>
            <person name="Reyrat J.-M."/>
        </authorList>
    </citation>
    <scope>NUCLEOTIDE SEQUENCE [LARGE SCALE GENOMIC DNA]</scope>
    <source>
        <strain>ATCC 700084 / mc(2)155</strain>
    </source>
</reference>
<reference key="3">
    <citation type="journal article" date="2009" name="Genome Res.">
        <title>Ortho-proteogenomics: multiple proteomes investigation through orthology and a new MS-based protocol.</title>
        <authorList>
            <person name="Gallien S."/>
            <person name="Perrodou E."/>
            <person name="Carapito C."/>
            <person name="Deshayes C."/>
            <person name="Reyrat J.-M."/>
            <person name="Van Dorsselaer A."/>
            <person name="Poch O."/>
            <person name="Schaeffer C."/>
            <person name="Lecompte O."/>
        </authorList>
    </citation>
    <scope>NUCLEOTIDE SEQUENCE [LARGE SCALE GENOMIC DNA]</scope>
    <source>
        <strain>ATCC 700084 / mc(2)155</strain>
    </source>
</reference>
<reference key="4">
    <citation type="journal article" date="2009" name="J. Mol. Biol.">
        <title>The vapBC operon from Mycobacterium smegmatis is an autoregulated toxin-antitoxin module that controls growth via inhibition of translation.</title>
        <authorList>
            <person name="Robson J."/>
            <person name="McKenzie J.L."/>
            <person name="Cursons R."/>
            <person name="Cook G.M."/>
            <person name="Arcus V.L."/>
        </authorList>
    </citation>
    <scope>FUNCTION AS A TOXIN</scope>
    <scope>SUBUNIT</scope>
    <scope>INDUCTION</scope>
    <scope>DNA-BINDING</scope>
    <scope>DISRUPTION PHENOTYPE</scope>
    <source>
        <strain>ATCC 700084 / mc(2)155</strain>
    </source>
</reference>
<reference key="5">
    <citation type="journal article" date="2012" name="J. Bacteriol.">
        <title>A VapBC toxin-antitoxin module is a posttranscriptional regulator of metabolic flux in mycobacteria.</title>
        <authorList>
            <person name="McKenzie J.L."/>
            <person name="Robson J."/>
            <person name="Berney M."/>
            <person name="Smith T.C."/>
            <person name="Ruthe A."/>
            <person name="Gardner P.P."/>
            <person name="Arcus V.L."/>
            <person name="Cook G.M."/>
        </authorList>
    </citation>
    <scope>FUNCTION AS AN ENDORIBONUCLEASE</scope>
    <scope>SUBSTRATES</scope>
    <scope>SUBUNIT</scope>
    <scope>COFACTOR</scope>
    <scope>RNA-BINDING</scope>
    <scope>DISRUPTION PHENOTYPE</scope>
    <source>
        <strain>ATCC 700084 / mc(2)155</strain>
    </source>
</reference>
<reference key="6">
    <citation type="journal article" date="2012" name="J. Biol. Chem.">
        <title>Toxin-antitoxin systems of Mycobacterium smegmatis are essential for cell survival.</title>
        <authorList>
            <person name="Frampton R."/>
            <person name="Aggio R.B."/>
            <person name="Villas-Boas S.G."/>
            <person name="Arcus V.L."/>
            <person name="Cook G.M."/>
        </authorList>
    </citation>
    <scope>DISRUPTION PHENOTYPE</scope>
    <source>
        <strain>ATCC 700084 / mc(2)155</strain>
    </source>
</reference>
<reference key="7">
    <citation type="journal article" date="2014" name="FEMS Microbiol. Lett.">
        <title>Toxin-antitoxin vapBC locus participates in formation of the dormant state in Mycobacterium smegmatis.</title>
        <authorList>
            <person name="Demidenok O.I."/>
            <person name="Kaprelyants A.S."/>
            <person name="Goncharenko A.V."/>
        </authorList>
    </citation>
    <scope>FUNCTION</scope>
    <scope>DISRUPTION PHENOTYPE</scope>
    <source>
        <strain>ATCC 700084 / mc(2)155</strain>
    </source>
</reference>
<protein>
    <recommendedName>
        <fullName>Ribonuclease VapC</fullName>
        <shortName>RNase VapC</shortName>
        <ecNumber>3.1.-.-</ecNumber>
    </recommendedName>
    <alternativeName>
        <fullName>Endoribonuclease VapC</fullName>
    </alternativeName>
    <alternativeName>
        <fullName>Toxin VapC</fullName>
    </alternativeName>
</protein>
<sequence length="129" mass="13910">MVIDTSALVAILTDEPDAELLEGAVADDPVRTMSTASYLETAIVIESRFGEPGGRELDLWLHRASVALVAVDADQADAARLAYRRYGKGRHRAGLNYGDCFSYALAKVSGQPLLFKGEAFRLTDVAAVH</sequence>
<name>VAPC_MYCS2</name>
<keyword id="KW-0238">DNA-binding</keyword>
<keyword id="KW-0378">Hydrolase</keyword>
<keyword id="KW-0460">Magnesium</keyword>
<keyword id="KW-0479">Metal-binding</keyword>
<keyword id="KW-0540">Nuclease</keyword>
<keyword id="KW-1185">Reference proteome</keyword>
<keyword id="KW-0694">RNA-binding</keyword>
<keyword id="KW-1277">Toxin-antitoxin system</keyword>
<organism>
    <name type="scientific">Mycolicibacterium smegmatis (strain ATCC 700084 / mc(2)155)</name>
    <name type="common">Mycobacterium smegmatis</name>
    <dbReference type="NCBI Taxonomy" id="246196"/>
    <lineage>
        <taxon>Bacteria</taxon>
        <taxon>Bacillati</taxon>
        <taxon>Actinomycetota</taxon>
        <taxon>Actinomycetes</taxon>
        <taxon>Mycobacteriales</taxon>
        <taxon>Mycobacteriaceae</taxon>
        <taxon>Mycolicibacterium</taxon>
    </lineage>
</organism>
<dbReference type="EC" id="3.1.-.-"/>
<dbReference type="EMBL" id="CP000480">
    <property type="protein sequence ID" value="ABK74630.1"/>
    <property type="molecule type" value="Genomic_DNA"/>
</dbReference>
<dbReference type="EMBL" id="CP001663">
    <property type="protein sequence ID" value="AFP37722.1"/>
    <property type="molecule type" value="Genomic_DNA"/>
</dbReference>
<dbReference type="RefSeq" id="WP_011727564.1">
    <property type="nucleotide sequence ID" value="NZ_SIJM01000042.1"/>
</dbReference>
<dbReference type="RefSeq" id="YP_885674.1">
    <property type="nucleotide sequence ID" value="NC_008596.1"/>
</dbReference>
<dbReference type="SMR" id="A0QRY6"/>
<dbReference type="STRING" id="246196.MSMEG_1284"/>
<dbReference type="PaxDb" id="246196-MSMEI_1246"/>
<dbReference type="KEGG" id="msb:LJ00_06395"/>
<dbReference type="KEGG" id="msg:MSMEI_1246"/>
<dbReference type="KEGG" id="msm:MSMEG_1284"/>
<dbReference type="PATRIC" id="fig|246196.19.peg.1273"/>
<dbReference type="eggNOG" id="COG3742">
    <property type="taxonomic scope" value="Bacteria"/>
</dbReference>
<dbReference type="OrthoDB" id="32625at2"/>
<dbReference type="Proteomes" id="UP000000757">
    <property type="component" value="Chromosome"/>
</dbReference>
<dbReference type="Proteomes" id="UP000006158">
    <property type="component" value="Chromosome"/>
</dbReference>
<dbReference type="GO" id="GO:0003677">
    <property type="term" value="F:DNA binding"/>
    <property type="evidence" value="ECO:0007669"/>
    <property type="project" value="UniProtKB-KW"/>
</dbReference>
<dbReference type="GO" id="GO:0000287">
    <property type="term" value="F:magnesium ion binding"/>
    <property type="evidence" value="ECO:0007669"/>
    <property type="project" value="UniProtKB-UniRule"/>
</dbReference>
<dbReference type="GO" id="GO:0003723">
    <property type="term" value="F:RNA binding"/>
    <property type="evidence" value="ECO:0007669"/>
    <property type="project" value="UniProtKB-KW"/>
</dbReference>
<dbReference type="GO" id="GO:0004540">
    <property type="term" value="F:RNA nuclease activity"/>
    <property type="evidence" value="ECO:0007669"/>
    <property type="project" value="InterPro"/>
</dbReference>
<dbReference type="CDD" id="cd09871">
    <property type="entry name" value="PIN_MtVapC28-VapC30-like"/>
    <property type="match status" value="1"/>
</dbReference>
<dbReference type="Gene3D" id="3.40.50.1010">
    <property type="entry name" value="5'-nuclease"/>
    <property type="match status" value="1"/>
</dbReference>
<dbReference type="HAMAP" id="MF_00265">
    <property type="entry name" value="VapC_Nob1"/>
    <property type="match status" value="1"/>
</dbReference>
<dbReference type="InterPro" id="IPR029060">
    <property type="entry name" value="PIN-like_dom_sf"/>
</dbReference>
<dbReference type="InterPro" id="IPR002716">
    <property type="entry name" value="PIN_dom"/>
</dbReference>
<dbReference type="InterPro" id="IPR050556">
    <property type="entry name" value="Type_II_TA_system_RNase"/>
</dbReference>
<dbReference type="InterPro" id="IPR022907">
    <property type="entry name" value="VapC_family"/>
</dbReference>
<dbReference type="PANTHER" id="PTHR33653">
    <property type="entry name" value="RIBONUCLEASE VAPC2"/>
    <property type="match status" value="1"/>
</dbReference>
<dbReference type="PANTHER" id="PTHR33653:SF1">
    <property type="entry name" value="RIBONUCLEASE VAPC2"/>
    <property type="match status" value="1"/>
</dbReference>
<dbReference type="Pfam" id="PF01850">
    <property type="entry name" value="PIN"/>
    <property type="match status" value="1"/>
</dbReference>
<dbReference type="SUPFAM" id="SSF88723">
    <property type="entry name" value="PIN domain-like"/>
    <property type="match status" value="1"/>
</dbReference>
<proteinExistence type="evidence at protein level"/>
<accession>A0QRY6</accession>
<feature type="chain" id="PRO_0000420845" description="Ribonuclease VapC">
    <location>
        <begin position="1"/>
        <end position="129"/>
    </location>
</feature>
<feature type="domain" description="PINc">
    <location>
        <begin position="1"/>
        <end position="124"/>
    </location>
</feature>
<feature type="binding site" evidence="1">
    <location>
        <position position="4"/>
    </location>
    <ligand>
        <name>Mg(2+)</name>
        <dbReference type="ChEBI" id="CHEBI:18420"/>
    </ligand>
</feature>
<feature type="binding site" evidence="1">
    <location>
        <position position="99"/>
    </location>
    <ligand>
        <name>Mg(2+)</name>
        <dbReference type="ChEBI" id="CHEBI:18420"/>
    </ligand>
</feature>
<comment type="function">
    <text evidence="2 4 5">Toxic component of a type II toxin-antitoxin (TA) system. A sequence-specific endoribonuclease, cleavage occurs after the first AU in the consensus sequence AUA(U/A); RNA secondary structure is probably important in substrate choice. Cuts in 5' and 3' UTRs. The TA system acts as a post-transcriptional regulator of carbon metabolism; in M.smegmatis 3 TA systems (VapB-VapC, MazE-MazF and Phd-Doc) may be involved in monitoring the nutritional supply and physiological state of the cell, linking catabolic with anabolic reactions. When overexpressed inhibits cell growth, via translation; 10-fold in a wild-type strain, 100-fold in a vapB-vapC disruption mutant (PubMed:19445953). Overexpression of VapC leads to differential expression of 205 genes; many down-regulated genes are predicted to be involved in the transport and catabolism of carbohydrates, while genes involved in phosphate transport and scavenging are up-regulated. VapC is bacteriostatic, not bacteriocidal; cells are ovoid, non-replicating and have decreased transcription, becoming dormant (PubMed:24417293). Digests ssRNA but not tRNA, dsRNA, ssDNA or dsDNA. The VapB-VapC complex binds its own promoter DNA, and VapC alone binds RNA.</text>
</comment>
<comment type="cofactor">
    <cofactor evidence="4">
        <name>Mg(2+)</name>
        <dbReference type="ChEBI" id="CHEBI:18420"/>
    </cofactor>
</comment>
<comment type="subunit">
    <text evidence="2 4">Forms a complex with VapB.</text>
</comment>
<comment type="induction">
    <text evidence="2">Expression is low but constitutive, and repressed by VapB-VapC. Translation of vapC mRNA requires VapB. Member of the vapB-vapC operon.</text>
</comment>
<comment type="disruption phenotype">
    <text evidence="2 3 4 5">The vapB-vapC operon is not essential; cells grow faster than wild-type on rich and minimal glycerol-containing medium. The operon deletion mutants die faster than wild-type under potassium-limiting conditions, which is prevented by overexpression of vapB (PubMed:24417293). The vapB antitoxin gene can be disrupted without causing death, however despite elevated vapC transcription, no VapC protein could be detected, suggesting that RNA processing and translational coupling are important in VapC expression. A triple TA mutant (missing vapB-vapC, mazE-mazF and phd-doc TA systems) survives antibiotic challenge, suggesting the TA systems are not required to generate drug-resistant cells. However the triple mutant is more sensitive to oxidative and heat stress, and does not survive long-term starvation during aerobic growth on complex medium. There is a difference in the level of branched-chain amino acids, which may play a role in monitoring the nutritional supply and physiological state of the cell.</text>
</comment>
<comment type="similarity">
    <text evidence="6">Belongs to the PINc/VapC protein family.</text>
</comment>
<gene>
    <name type="primary">vapC</name>
    <name type="ordered locus">MSMEG_1284</name>
    <name type="ordered locus">MSMEI_1246</name>
</gene>
<evidence type="ECO:0000255" key="1"/>
<evidence type="ECO:0000269" key="2">
    <source>
    </source>
</evidence>
<evidence type="ECO:0000269" key="3">
    <source>
    </source>
</evidence>
<evidence type="ECO:0000269" key="4">
    <source>
    </source>
</evidence>
<evidence type="ECO:0000269" key="5">
    <source>
    </source>
</evidence>
<evidence type="ECO:0000305" key="6"/>